<comment type="function">
    <text evidence="1">Catalyzes the NAD(P)-dependent oxidation of 4-(phosphooxy)-L-threonine (HTP) into 2-amino-3-oxo-4-(phosphooxy)butyric acid which spontaneously decarboxylates to form 3-amino-2-oxopropyl phosphate (AHAP).</text>
</comment>
<comment type="catalytic activity">
    <reaction evidence="1">
        <text>4-(phosphooxy)-L-threonine + NAD(+) = 3-amino-2-oxopropyl phosphate + CO2 + NADH</text>
        <dbReference type="Rhea" id="RHEA:32275"/>
        <dbReference type="ChEBI" id="CHEBI:16526"/>
        <dbReference type="ChEBI" id="CHEBI:57279"/>
        <dbReference type="ChEBI" id="CHEBI:57540"/>
        <dbReference type="ChEBI" id="CHEBI:57945"/>
        <dbReference type="ChEBI" id="CHEBI:58452"/>
        <dbReference type="EC" id="1.1.1.262"/>
    </reaction>
</comment>
<comment type="cofactor">
    <cofactor evidence="1">
        <name>Zn(2+)</name>
        <dbReference type="ChEBI" id="CHEBI:29105"/>
    </cofactor>
    <cofactor evidence="1">
        <name>Mg(2+)</name>
        <dbReference type="ChEBI" id="CHEBI:18420"/>
    </cofactor>
    <cofactor evidence="1">
        <name>Co(2+)</name>
        <dbReference type="ChEBI" id="CHEBI:48828"/>
    </cofactor>
</comment>
<comment type="pathway">
    <text evidence="1">Cofactor biosynthesis; pyridoxine 5'-phosphate biosynthesis; pyridoxine 5'-phosphate from D-erythrose 4-phosphate: step 4/5.</text>
</comment>
<comment type="subunit">
    <text evidence="1">Homodimer.</text>
</comment>
<comment type="subcellular location">
    <subcellularLocation>
        <location evidence="1">Cytoplasm</location>
    </subcellularLocation>
</comment>
<comment type="miscellaneous">
    <text evidence="1">The active site is located at the dimer interface.</text>
</comment>
<comment type="similarity">
    <text evidence="1">Belongs to the PdxA family.</text>
</comment>
<sequence>MVKKKIAISCGDIQGIGLELILKSHKEVSVLCEPLYLIHSELLGRANQLLTNAYEVKPLNAIAINSPLPSFNSSTIGKVSAQSGAYSFESFRKACELADDKEVDSICTMPINKLAWQQAQIPFVGHTDFLKQRYKEHQIIMMLGCPKLFVGLFSDHVPLRAVSQLIQVKALVQFLLAFQKSTQAQIIQVCGFNPHAGEEGLFGEEDEKILKAIQESNQTLGFECFLGPLPADSAFAPNKRQITPFYVSMSHDVGLAPLKALYFDESINVSLNAPILRASTDHGTAFDIAYQNKANNKSYLNAIKYLSQRL</sequence>
<feature type="chain" id="PRO_1000051503" description="4-hydroxythreonine-4-phosphate dehydrogenase">
    <location>
        <begin position="1"/>
        <end position="310"/>
    </location>
</feature>
<feature type="binding site" evidence="1">
    <location>
        <position position="126"/>
    </location>
    <ligand>
        <name>substrate</name>
    </ligand>
</feature>
<feature type="binding site" evidence="1">
    <location>
        <position position="127"/>
    </location>
    <ligand>
        <name>substrate</name>
    </ligand>
</feature>
<feature type="binding site" evidence="1">
    <location>
        <position position="156"/>
    </location>
    <ligand>
        <name>a divalent metal cation</name>
        <dbReference type="ChEBI" id="CHEBI:60240"/>
        <note>ligand shared between dimeric partners</note>
    </ligand>
</feature>
<feature type="binding site" evidence="1">
    <location>
        <position position="195"/>
    </location>
    <ligand>
        <name>a divalent metal cation</name>
        <dbReference type="ChEBI" id="CHEBI:60240"/>
        <note>ligand shared between dimeric partners</note>
    </ligand>
</feature>
<feature type="binding site" evidence="1">
    <location>
        <position position="251"/>
    </location>
    <ligand>
        <name>a divalent metal cation</name>
        <dbReference type="ChEBI" id="CHEBI:60240"/>
        <note>ligand shared between dimeric partners</note>
    </ligand>
</feature>
<feature type="binding site" evidence="1">
    <location>
        <position position="259"/>
    </location>
    <ligand>
        <name>substrate</name>
    </ligand>
</feature>
<feature type="binding site" evidence="1">
    <location>
        <position position="268"/>
    </location>
    <ligand>
        <name>substrate</name>
    </ligand>
</feature>
<feature type="binding site" evidence="1">
    <location>
        <position position="277"/>
    </location>
    <ligand>
        <name>substrate</name>
    </ligand>
</feature>
<evidence type="ECO:0000255" key="1">
    <source>
        <dbReference type="HAMAP-Rule" id="MF_02086"/>
    </source>
</evidence>
<name>PDXA_HELAH</name>
<accession>Q17ZN0</accession>
<protein>
    <recommendedName>
        <fullName evidence="1">4-hydroxythreonine-4-phosphate dehydrogenase</fullName>
        <ecNumber evidence="1">1.1.1.262</ecNumber>
    </recommendedName>
    <alternativeName>
        <fullName evidence="1">4-(phosphohydroxy)-L-threonine dehydrogenase</fullName>
    </alternativeName>
</protein>
<organism>
    <name type="scientific">Helicobacter acinonychis (strain Sheeba)</name>
    <dbReference type="NCBI Taxonomy" id="382638"/>
    <lineage>
        <taxon>Bacteria</taxon>
        <taxon>Pseudomonadati</taxon>
        <taxon>Campylobacterota</taxon>
        <taxon>Epsilonproteobacteria</taxon>
        <taxon>Campylobacterales</taxon>
        <taxon>Helicobacteraceae</taxon>
        <taxon>Helicobacter</taxon>
    </lineage>
</organism>
<dbReference type="EC" id="1.1.1.262" evidence="1"/>
<dbReference type="EMBL" id="AM260522">
    <property type="protein sequence ID" value="CAJ98896.1"/>
    <property type="molecule type" value="Genomic_DNA"/>
</dbReference>
<dbReference type="RefSeq" id="WP_011577018.1">
    <property type="nucleotide sequence ID" value="NC_008229.1"/>
</dbReference>
<dbReference type="SMR" id="Q17ZN0"/>
<dbReference type="STRING" id="382638.Hac_0032"/>
<dbReference type="GeneID" id="31757588"/>
<dbReference type="KEGG" id="hac:Hac_0032"/>
<dbReference type="eggNOG" id="COG1995">
    <property type="taxonomic scope" value="Bacteria"/>
</dbReference>
<dbReference type="HOGENOM" id="CLU_040168_0_0_7"/>
<dbReference type="OrthoDB" id="9801783at2"/>
<dbReference type="BioCyc" id="HACI382638:HAC_RS00155-MONOMER"/>
<dbReference type="UniPathway" id="UPA00244">
    <property type="reaction ID" value="UER00312"/>
</dbReference>
<dbReference type="Proteomes" id="UP000000775">
    <property type="component" value="Chromosome"/>
</dbReference>
<dbReference type="GO" id="GO:0005737">
    <property type="term" value="C:cytoplasm"/>
    <property type="evidence" value="ECO:0007669"/>
    <property type="project" value="UniProtKB-SubCell"/>
</dbReference>
<dbReference type="GO" id="GO:0050570">
    <property type="term" value="F:4-hydroxythreonine-4-phosphate dehydrogenase activity"/>
    <property type="evidence" value="ECO:0007669"/>
    <property type="project" value="UniProtKB-UniRule"/>
</dbReference>
<dbReference type="GO" id="GO:0050897">
    <property type="term" value="F:cobalt ion binding"/>
    <property type="evidence" value="ECO:0007669"/>
    <property type="project" value="UniProtKB-UniRule"/>
</dbReference>
<dbReference type="GO" id="GO:0000287">
    <property type="term" value="F:magnesium ion binding"/>
    <property type="evidence" value="ECO:0007669"/>
    <property type="project" value="UniProtKB-UniRule"/>
</dbReference>
<dbReference type="GO" id="GO:0051287">
    <property type="term" value="F:NAD binding"/>
    <property type="evidence" value="ECO:0007669"/>
    <property type="project" value="InterPro"/>
</dbReference>
<dbReference type="GO" id="GO:0008270">
    <property type="term" value="F:zinc ion binding"/>
    <property type="evidence" value="ECO:0007669"/>
    <property type="project" value="UniProtKB-UniRule"/>
</dbReference>
<dbReference type="GO" id="GO:0042823">
    <property type="term" value="P:pyridoxal phosphate biosynthetic process"/>
    <property type="evidence" value="ECO:0007669"/>
    <property type="project" value="UniProtKB-UniRule"/>
</dbReference>
<dbReference type="GO" id="GO:0008615">
    <property type="term" value="P:pyridoxine biosynthetic process"/>
    <property type="evidence" value="ECO:0007669"/>
    <property type="project" value="UniProtKB-UniRule"/>
</dbReference>
<dbReference type="Gene3D" id="3.40.718.10">
    <property type="entry name" value="Isopropylmalate Dehydrogenase"/>
    <property type="match status" value="1"/>
</dbReference>
<dbReference type="HAMAP" id="MF_02086">
    <property type="entry name" value="PdxA_Epsilonprot"/>
    <property type="match status" value="1"/>
</dbReference>
<dbReference type="InterPro" id="IPR037539">
    <property type="entry name" value="PdxA_epsilonprot"/>
</dbReference>
<dbReference type="InterPro" id="IPR005255">
    <property type="entry name" value="PdxA_fam"/>
</dbReference>
<dbReference type="NCBIfam" id="TIGR00557">
    <property type="entry name" value="pdxA"/>
    <property type="match status" value="1"/>
</dbReference>
<dbReference type="NCBIfam" id="NF003040">
    <property type="entry name" value="PRK03946.1"/>
    <property type="match status" value="1"/>
</dbReference>
<dbReference type="PANTHER" id="PTHR30004">
    <property type="entry name" value="4-HYDROXYTHREONINE-4-PHOSPHATE DEHYDROGENASE"/>
    <property type="match status" value="1"/>
</dbReference>
<dbReference type="PANTHER" id="PTHR30004:SF6">
    <property type="entry name" value="D-THREONATE 4-PHOSPHATE DEHYDROGENASE"/>
    <property type="match status" value="1"/>
</dbReference>
<dbReference type="Pfam" id="PF04166">
    <property type="entry name" value="PdxA"/>
    <property type="match status" value="1"/>
</dbReference>
<dbReference type="SUPFAM" id="SSF53659">
    <property type="entry name" value="Isocitrate/Isopropylmalate dehydrogenase-like"/>
    <property type="match status" value="1"/>
</dbReference>
<proteinExistence type="inferred from homology"/>
<keyword id="KW-0170">Cobalt</keyword>
<keyword id="KW-0963">Cytoplasm</keyword>
<keyword id="KW-0460">Magnesium</keyword>
<keyword id="KW-0479">Metal-binding</keyword>
<keyword id="KW-0520">NAD</keyword>
<keyword id="KW-0521">NADP</keyword>
<keyword id="KW-0560">Oxidoreductase</keyword>
<keyword id="KW-0664">Pyridoxine biosynthesis</keyword>
<keyword id="KW-0862">Zinc</keyword>
<gene>
    <name evidence="1" type="primary">pdxA</name>
    <name type="ordered locus">Hac_0032</name>
</gene>
<reference key="1">
    <citation type="journal article" date="2006" name="PLoS Genet.">
        <title>Who ate whom? Adaptive Helicobacter genomic changes that accompanied a host jump from early humans to large felines.</title>
        <authorList>
            <person name="Eppinger M."/>
            <person name="Baar C."/>
            <person name="Linz B."/>
            <person name="Raddatz G."/>
            <person name="Lanz C."/>
            <person name="Keller H."/>
            <person name="Morelli G."/>
            <person name="Gressmann H."/>
            <person name="Achtman M."/>
            <person name="Schuster S.C."/>
        </authorList>
    </citation>
    <scope>NUCLEOTIDE SEQUENCE [LARGE SCALE GENOMIC DNA]</scope>
    <source>
        <strain>Sheeba</strain>
    </source>
</reference>